<name>SUCC_SHIF8</name>
<reference key="1">
    <citation type="journal article" date="2006" name="BMC Genomics">
        <title>Complete genome sequence of Shigella flexneri 5b and comparison with Shigella flexneri 2a.</title>
        <authorList>
            <person name="Nie H."/>
            <person name="Yang F."/>
            <person name="Zhang X."/>
            <person name="Yang J."/>
            <person name="Chen L."/>
            <person name="Wang J."/>
            <person name="Xiong Z."/>
            <person name="Peng J."/>
            <person name="Sun L."/>
            <person name="Dong J."/>
            <person name="Xue Y."/>
            <person name="Xu X."/>
            <person name="Chen S."/>
            <person name="Yao Z."/>
            <person name="Shen Y."/>
            <person name="Jin Q."/>
        </authorList>
    </citation>
    <scope>NUCLEOTIDE SEQUENCE [LARGE SCALE GENOMIC DNA]</scope>
    <source>
        <strain>8401</strain>
    </source>
</reference>
<dbReference type="EC" id="6.2.1.5" evidence="1"/>
<dbReference type="EMBL" id="CP000266">
    <property type="protein sequence ID" value="ABF02860.1"/>
    <property type="molecule type" value="Genomic_DNA"/>
</dbReference>
<dbReference type="RefSeq" id="WP_001048597.1">
    <property type="nucleotide sequence ID" value="NC_008258.1"/>
</dbReference>
<dbReference type="SMR" id="Q0T6W6"/>
<dbReference type="KEGG" id="sfv:SFV_0608"/>
<dbReference type="HOGENOM" id="CLU_037430_4_0_6"/>
<dbReference type="UniPathway" id="UPA00223">
    <property type="reaction ID" value="UER00999"/>
</dbReference>
<dbReference type="Proteomes" id="UP000000659">
    <property type="component" value="Chromosome"/>
</dbReference>
<dbReference type="GO" id="GO:0005829">
    <property type="term" value="C:cytosol"/>
    <property type="evidence" value="ECO:0007669"/>
    <property type="project" value="TreeGrafter"/>
</dbReference>
<dbReference type="GO" id="GO:0042709">
    <property type="term" value="C:succinate-CoA ligase complex"/>
    <property type="evidence" value="ECO:0007669"/>
    <property type="project" value="TreeGrafter"/>
</dbReference>
<dbReference type="GO" id="GO:0005524">
    <property type="term" value="F:ATP binding"/>
    <property type="evidence" value="ECO:0007669"/>
    <property type="project" value="UniProtKB-UniRule"/>
</dbReference>
<dbReference type="GO" id="GO:0000287">
    <property type="term" value="F:magnesium ion binding"/>
    <property type="evidence" value="ECO:0007669"/>
    <property type="project" value="UniProtKB-UniRule"/>
</dbReference>
<dbReference type="GO" id="GO:0004775">
    <property type="term" value="F:succinate-CoA ligase (ADP-forming) activity"/>
    <property type="evidence" value="ECO:0007669"/>
    <property type="project" value="UniProtKB-UniRule"/>
</dbReference>
<dbReference type="GO" id="GO:0004776">
    <property type="term" value="F:succinate-CoA ligase (GDP-forming) activity"/>
    <property type="evidence" value="ECO:0007669"/>
    <property type="project" value="RHEA"/>
</dbReference>
<dbReference type="GO" id="GO:0006104">
    <property type="term" value="P:succinyl-CoA metabolic process"/>
    <property type="evidence" value="ECO:0007669"/>
    <property type="project" value="TreeGrafter"/>
</dbReference>
<dbReference type="GO" id="GO:0006099">
    <property type="term" value="P:tricarboxylic acid cycle"/>
    <property type="evidence" value="ECO:0007669"/>
    <property type="project" value="UniProtKB-UniRule"/>
</dbReference>
<dbReference type="FunFam" id="3.30.1490.20:FF:000002">
    <property type="entry name" value="Succinate--CoA ligase [ADP-forming] subunit beta"/>
    <property type="match status" value="1"/>
</dbReference>
<dbReference type="FunFam" id="3.30.470.20:FF:000002">
    <property type="entry name" value="Succinate--CoA ligase [ADP-forming] subunit beta"/>
    <property type="match status" value="1"/>
</dbReference>
<dbReference type="FunFam" id="3.40.50.261:FF:000001">
    <property type="entry name" value="Succinate--CoA ligase [ADP-forming] subunit beta"/>
    <property type="match status" value="1"/>
</dbReference>
<dbReference type="Gene3D" id="3.30.1490.20">
    <property type="entry name" value="ATP-grasp fold, A domain"/>
    <property type="match status" value="1"/>
</dbReference>
<dbReference type="Gene3D" id="3.30.470.20">
    <property type="entry name" value="ATP-grasp fold, B domain"/>
    <property type="match status" value="1"/>
</dbReference>
<dbReference type="Gene3D" id="3.40.50.261">
    <property type="entry name" value="Succinyl-CoA synthetase domains"/>
    <property type="match status" value="1"/>
</dbReference>
<dbReference type="HAMAP" id="MF_00558">
    <property type="entry name" value="Succ_CoA_beta"/>
    <property type="match status" value="1"/>
</dbReference>
<dbReference type="InterPro" id="IPR011761">
    <property type="entry name" value="ATP-grasp"/>
</dbReference>
<dbReference type="InterPro" id="IPR013650">
    <property type="entry name" value="ATP-grasp_succ-CoA_synth-type"/>
</dbReference>
<dbReference type="InterPro" id="IPR013815">
    <property type="entry name" value="ATP_grasp_subdomain_1"/>
</dbReference>
<dbReference type="InterPro" id="IPR017866">
    <property type="entry name" value="Succ-CoA_synthase_bsu_CS"/>
</dbReference>
<dbReference type="InterPro" id="IPR005811">
    <property type="entry name" value="SUCC_ACL_C"/>
</dbReference>
<dbReference type="InterPro" id="IPR005809">
    <property type="entry name" value="Succ_CoA_ligase-like_bsu"/>
</dbReference>
<dbReference type="InterPro" id="IPR016102">
    <property type="entry name" value="Succinyl-CoA_synth-like"/>
</dbReference>
<dbReference type="NCBIfam" id="NF001913">
    <property type="entry name" value="PRK00696.1"/>
    <property type="match status" value="1"/>
</dbReference>
<dbReference type="NCBIfam" id="TIGR01016">
    <property type="entry name" value="sucCoAbeta"/>
    <property type="match status" value="1"/>
</dbReference>
<dbReference type="PANTHER" id="PTHR11815:SF10">
    <property type="entry name" value="SUCCINATE--COA LIGASE [GDP-FORMING] SUBUNIT BETA, MITOCHONDRIAL"/>
    <property type="match status" value="1"/>
</dbReference>
<dbReference type="PANTHER" id="PTHR11815">
    <property type="entry name" value="SUCCINYL-COA SYNTHETASE BETA CHAIN"/>
    <property type="match status" value="1"/>
</dbReference>
<dbReference type="Pfam" id="PF08442">
    <property type="entry name" value="ATP-grasp_2"/>
    <property type="match status" value="1"/>
</dbReference>
<dbReference type="Pfam" id="PF00549">
    <property type="entry name" value="Ligase_CoA"/>
    <property type="match status" value="1"/>
</dbReference>
<dbReference type="PIRSF" id="PIRSF001554">
    <property type="entry name" value="SucCS_beta"/>
    <property type="match status" value="1"/>
</dbReference>
<dbReference type="SUPFAM" id="SSF56059">
    <property type="entry name" value="Glutathione synthetase ATP-binding domain-like"/>
    <property type="match status" value="1"/>
</dbReference>
<dbReference type="SUPFAM" id="SSF52210">
    <property type="entry name" value="Succinyl-CoA synthetase domains"/>
    <property type="match status" value="1"/>
</dbReference>
<dbReference type="PROSITE" id="PS50975">
    <property type="entry name" value="ATP_GRASP"/>
    <property type="match status" value="1"/>
</dbReference>
<dbReference type="PROSITE" id="PS01217">
    <property type="entry name" value="SUCCINYL_COA_LIG_3"/>
    <property type="match status" value="1"/>
</dbReference>
<keyword id="KW-0067">ATP-binding</keyword>
<keyword id="KW-0436">Ligase</keyword>
<keyword id="KW-0460">Magnesium</keyword>
<keyword id="KW-0479">Metal-binding</keyword>
<keyword id="KW-0547">Nucleotide-binding</keyword>
<keyword id="KW-0816">Tricarboxylic acid cycle</keyword>
<organism>
    <name type="scientific">Shigella flexneri serotype 5b (strain 8401)</name>
    <dbReference type="NCBI Taxonomy" id="373384"/>
    <lineage>
        <taxon>Bacteria</taxon>
        <taxon>Pseudomonadati</taxon>
        <taxon>Pseudomonadota</taxon>
        <taxon>Gammaproteobacteria</taxon>
        <taxon>Enterobacterales</taxon>
        <taxon>Enterobacteriaceae</taxon>
        <taxon>Shigella</taxon>
    </lineage>
</organism>
<feature type="chain" id="PRO_1000082234" description="Succinate--CoA ligase [ADP-forming] subunit beta">
    <location>
        <begin position="1"/>
        <end position="388"/>
    </location>
</feature>
<feature type="domain" description="ATP-grasp" evidence="1">
    <location>
        <begin position="9"/>
        <end position="244"/>
    </location>
</feature>
<feature type="binding site" evidence="1">
    <location>
        <position position="46"/>
    </location>
    <ligand>
        <name>ATP</name>
        <dbReference type="ChEBI" id="CHEBI:30616"/>
    </ligand>
</feature>
<feature type="binding site" evidence="1">
    <location>
        <begin position="53"/>
        <end position="55"/>
    </location>
    <ligand>
        <name>ATP</name>
        <dbReference type="ChEBI" id="CHEBI:30616"/>
    </ligand>
</feature>
<feature type="binding site" evidence="1">
    <location>
        <position position="99"/>
    </location>
    <ligand>
        <name>ATP</name>
        <dbReference type="ChEBI" id="CHEBI:30616"/>
    </ligand>
</feature>
<feature type="binding site" evidence="1">
    <location>
        <position position="102"/>
    </location>
    <ligand>
        <name>ATP</name>
        <dbReference type="ChEBI" id="CHEBI:30616"/>
    </ligand>
</feature>
<feature type="binding site" evidence="1">
    <location>
        <position position="107"/>
    </location>
    <ligand>
        <name>ATP</name>
        <dbReference type="ChEBI" id="CHEBI:30616"/>
    </ligand>
</feature>
<feature type="binding site" evidence="1">
    <location>
        <position position="199"/>
    </location>
    <ligand>
        <name>Mg(2+)</name>
        <dbReference type="ChEBI" id="CHEBI:18420"/>
    </ligand>
</feature>
<feature type="binding site" evidence="1">
    <location>
        <position position="213"/>
    </location>
    <ligand>
        <name>Mg(2+)</name>
        <dbReference type="ChEBI" id="CHEBI:18420"/>
    </ligand>
</feature>
<feature type="binding site" evidence="1">
    <location>
        <position position="264"/>
    </location>
    <ligand>
        <name>substrate</name>
        <note>ligand shared with subunit alpha</note>
    </ligand>
</feature>
<feature type="binding site" evidence="1">
    <location>
        <begin position="321"/>
        <end position="323"/>
    </location>
    <ligand>
        <name>substrate</name>
        <note>ligand shared with subunit alpha</note>
    </ligand>
</feature>
<accession>Q0T6W6</accession>
<evidence type="ECO:0000255" key="1">
    <source>
        <dbReference type="HAMAP-Rule" id="MF_00558"/>
    </source>
</evidence>
<proteinExistence type="inferred from homology"/>
<gene>
    <name evidence="1" type="primary">sucC</name>
    <name type="ordered locus">SFV_0608</name>
</gene>
<comment type="function">
    <text evidence="1">Succinyl-CoA synthetase functions in the citric acid cycle (TCA), coupling the hydrolysis of succinyl-CoA to the synthesis of either ATP or GTP and thus represents the only step of substrate-level phosphorylation in the TCA. The beta subunit provides nucleotide specificity of the enzyme and binds the substrate succinate, while the binding sites for coenzyme A and phosphate are found in the alpha subunit.</text>
</comment>
<comment type="catalytic activity">
    <reaction evidence="1">
        <text>succinate + ATP + CoA = succinyl-CoA + ADP + phosphate</text>
        <dbReference type="Rhea" id="RHEA:17661"/>
        <dbReference type="ChEBI" id="CHEBI:30031"/>
        <dbReference type="ChEBI" id="CHEBI:30616"/>
        <dbReference type="ChEBI" id="CHEBI:43474"/>
        <dbReference type="ChEBI" id="CHEBI:57287"/>
        <dbReference type="ChEBI" id="CHEBI:57292"/>
        <dbReference type="ChEBI" id="CHEBI:456216"/>
        <dbReference type="EC" id="6.2.1.5"/>
    </reaction>
    <physiologicalReaction direction="right-to-left" evidence="1">
        <dbReference type="Rhea" id="RHEA:17663"/>
    </physiologicalReaction>
</comment>
<comment type="catalytic activity">
    <reaction evidence="1">
        <text>GTP + succinate + CoA = succinyl-CoA + GDP + phosphate</text>
        <dbReference type="Rhea" id="RHEA:22120"/>
        <dbReference type="ChEBI" id="CHEBI:30031"/>
        <dbReference type="ChEBI" id="CHEBI:37565"/>
        <dbReference type="ChEBI" id="CHEBI:43474"/>
        <dbReference type="ChEBI" id="CHEBI:57287"/>
        <dbReference type="ChEBI" id="CHEBI:57292"/>
        <dbReference type="ChEBI" id="CHEBI:58189"/>
    </reaction>
    <physiologicalReaction direction="right-to-left" evidence="1">
        <dbReference type="Rhea" id="RHEA:22122"/>
    </physiologicalReaction>
</comment>
<comment type="cofactor">
    <cofactor evidence="1">
        <name>Mg(2+)</name>
        <dbReference type="ChEBI" id="CHEBI:18420"/>
    </cofactor>
    <text evidence="1">Binds 1 Mg(2+) ion per subunit.</text>
</comment>
<comment type="pathway">
    <text evidence="1">Carbohydrate metabolism; tricarboxylic acid cycle; succinate from succinyl-CoA (ligase route): step 1/1.</text>
</comment>
<comment type="subunit">
    <text evidence="1">Heterotetramer of two alpha and two beta subunits.</text>
</comment>
<comment type="similarity">
    <text evidence="1">Belongs to the succinate/malate CoA ligase beta subunit family.</text>
</comment>
<sequence>MNLHEYQAKQLFARYGLPAPVGYACTTPREAEEAASKIGAGPWVVKCQVHAGGRGKAGGVKVVNSKEDIRAFAENWLGKRLVTYQTDANGQPVNQILVEAATDIAKELYLGAVVDRSSRRVVFMASTEGGVEIEKVAEETPHLIHKVALDPLTGPMPYQGRELAFKLGLEGKLVQQFTKIFMGLATIFLERDLALIEINPLVITKQGDLICLDGKLGADGNALFRQPDLREMRDQSQEDPRAAQAAQWELNYVALDGNIGCMVNGAGLAMGTMDIVKLHGGEPANFLDVGGGATKERVTEAFKIILSDDKVKAVLVNIFGGIVRCDLIADGIIGAVAEVGVNVPVVVRLEGNNAELGAKKLADSGLNIIAAKGLTDAAQQVVAAVEGK</sequence>
<protein>
    <recommendedName>
        <fullName evidence="1">Succinate--CoA ligase [ADP-forming] subunit beta</fullName>
        <ecNumber evidence="1">6.2.1.5</ecNumber>
    </recommendedName>
    <alternativeName>
        <fullName evidence="1">Succinyl-CoA synthetase subunit beta</fullName>
        <shortName evidence="1">SCS-beta</shortName>
    </alternativeName>
</protein>